<sequence>MTVTRFAPSPTGYLHIGGLRTALFSWLTARHNNGKFLLRIEDTDMARNSEEAKDAILKAFEWVGMSHDGEVVYQSKRFDLYKKYIDQLLEEGKAYKCYMTKEELNALREEQMAKKERTRYDGRYRDFTGTPPEGVKPVIRIKAPQEGTISFVDGVKGAMNIAANEVDDFIIARSDGTPTYNFVVAIDDALMGLTDVIRGDDHLYNTPKQIVVYNALGFSIPNFYHVAMINNEQGKKLSKRDGATDVMEYKALGFLPEALLNFLVRLGWSHGDQEIFSVEEMIEQFDPKDINKSASNYNLDKLLWLNAHYIKNKSNSELAELLKEFGVDISEHDKLEMLLDATKERGKTLVELAEQIKLILTAPTDYDEKAVKKAFKGEAKEILTDFIAMLQTWEKPLHLPVDYHEVMEKIVAEKEIGFGKIGMPLRVSLLGSMTGAGMDEVMAIIGVDETIERIERAVSTIA</sequence>
<dbReference type="EC" id="6.1.1.17" evidence="1"/>
<dbReference type="EMBL" id="AP009179">
    <property type="protein sequence ID" value="BAF71068.1"/>
    <property type="molecule type" value="Genomic_DNA"/>
</dbReference>
<dbReference type="RefSeq" id="WP_011979801.1">
    <property type="nucleotide sequence ID" value="NC_009663.1"/>
</dbReference>
<dbReference type="SMR" id="A6Q6F9"/>
<dbReference type="STRING" id="387093.SUN_0108"/>
<dbReference type="KEGG" id="sun:SUN_0108"/>
<dbReference type="eggNOG" id="COG0008">
    <property type="taxonomic scope" value="Bacteria"/>
</dbReference>
<dbReference type="HOGENOM" id="CLU_015768_6_3_7"/>
<dbReference type="OrthoDB" id="9807503at2"/>
<dbReference type="Proteomes" id="UP000006378">
    <property type="component" value="Chromosome"/>
</dbReference>
<dbReference type="GO" id="GO:0005829">
    <property type="term" value="C:cytosol"/>
    <property type="evidence" value="ECO:0007669"/>
    <property type="project" value="TreeGrafter"/>
</dbReference>
<dbReference type="GO" id="GO:0005524">
    <property type="term" value="F:ATP binding"/>
    <property type="evidence" value="ECO:0007669"/>
    <property type="project" value="UniProtKB-UniRule"/>
</dbReference>
<dbReference type="GO" id="GO:0004818">
    <property type="term" value="F:glutamate-tRNA ligase activity"/>
    <property type="evidence" value="ECO:0007669"/>
    <property type="project" value="UniProtKB-UniRule"/>
</dbReference>
<dbReference type="GO" id="GO:0000049">
    <property type="term" value="F:tRNA binding"/>
    <property type="evidence" value="ECO:0007669"/>
    <property type="project" value="InterPro"/>
</dbReference>
<dbReference type="GO" id="GO:0008270">
    <property type="term" value="F:zinc ion binding"/>
    <property type="evidence" value="ECO:0007669"/>
    <property type="project" value="InterPro"/>
</dbReference>
<dbReference type="GO" id="GO:0006424">
    <property type="term" value="P:glutamyl-tRNA aminoacylation"/>
    <property type="evidence" value="ECO:0007669"/>
    <property type="project" value="UniProtKB-UniRule"/>
</dbReference>
<dbReference type="CDD" id="cd00808">
    <property type="entry name" value="GluRS_core"/>
    <property type="match status" value="1"/>
</dbReference>
<dbReference type="FunFam" id="3.40.50.620:FF:000007">
    <property type="entry name" value="Glutamate--tRNA ligase"/>
    <property type="match status" value="1"/>
</dbReference>
<dbReference type="Gene3D" id="1.10.10.350">
    <property type="match status" value="1"/>
</dbReference>
<dbReference type="Gene3D" id="3.40.50.620">
    <property type="entry name" value="HUPs"/>
    <property type="match status" value="1"/>
</dbReference>
<dbReference type="HAMAP" id="MF_00022">
    <property type="entry name" value="Glu_tRNA_synth_type1"/>
    <property type="match status" value="1"/>
</dbReference>
<dbReference type="InterPro" id="IPR045462">
    <property type="entry name" value="aa-tRNA-synth_I_cd-bd"/>
</dbReference>
<dbReference type="InterPro" id="IPR020751">
    <property type="entry name" value="aa-tRNA-synth_I_codon-bd_sub2"/>
</dbReference>
<dbReference type="InterPro" id="IPR001412">
    <property type="entry name" value="aa-tRNA-synth_I_CS"/>
</dbReference>
<dbReference type="InterPro" id="IPR008925">
    <property type="entry name" value="aa_tRNA-synth_I_cd-bd_sf"/>
</dbReference>
<dbReference type="InterPro" id="IPR004527">
    <property type="entry name" value="Glu-tRNA-ligase_bac/mito"/>
</dbReference>
<dbReference type="InterPro" id="IPR000924">
    <property type="entry name" value="Glu/Gln-tRNA-synth"/>
</dbReference>
<dbReference type="InterPro" id="IPR020058">
    <property type="entry name" value="Glu/Gln-tRNA-synth_Ib_cat-dom"/>
</dbReference>
<dbReference type="InterPro" id="IPR049940">
    <property type="entry name" value="GluQ/Sye"/>
</dbReference>
<dbReference type="InterPro" id="IPR033910">
    <property type="entry name" value="GluRS_core"/>
</dbReference>
<dbReference type="InterPro" id="IPR014729">
    <property type="entry name" value="Rossmann-like_a/b/a_fold"/>
</dbReference>
<dbReference type="NCBIfam" id="TIGR00464">
    <property type="entry name" value="gltX_bact"/>
    <property type="match status" value="1"/>
</dbReference>
<dbReference type="PANTHER" id="PTHR43311">
    <property type="entry name" value="GLUTAMATE--TRNA LIGASE"/>
    <property type="match status" value="1"/>
</dbReference>
<dbReference type="PANTHER" id="PTHR43311:SF2">
    <property type="entry name" value="GLUTAMATE--TRNA LIGASE, MITOCHONDRIAL-RELATED"/>
    <property type="match status" value="1"/>
</dbReference>
<dbReference type="Pfam" id="PF19269">
    <property type="entry name" value="Anticodon_2"/>
    <property type="match status" value="1"/>
</dbReference>
<dbReference type="Pfam" id="PF00749">
    <property type="entry name" value="tRNA-synt_1c"/>
    <property type="match status" value="1"/>
</dbReference>
<dbReference type="PRINTS" id="PR00987">
    <property type="entry name" value="TRNASYNTHGLU"/>
</dbReference>
<dbReference type="SUPFAM" id="SSF48163">
    <property type="entry name" value="An anticodon-binding domain of class I aminoacyl-tRNA synthetases"/>
    <property type="match status" value="1"/>
</dbReference>
<dbReference type="SUPFAM" id="SSF52374">
    <property type="entry name" value="Nucleotidylyl transferase"/>
    <property type="match status" value="1"/>
</dbReference>
<dbReference type="PROSITE" id="PS00178">
    <property type="entry name" value="AA_TRNA_LIGASE_I"/>
    <property type="match status" value="1"/>
</dbReference>
<organism>
    <name type="scientific">Sulfurovum sp. (strain NBC37-1)</name>
    <dbReference type="NCBI Taxonomy" id="387093"/>
    <lineage>
        <taxon>Bacteria</taxon>
        <taxon>Pseudomonadati</taxon>
        <taxon>Campylobacterota</taxon>
        <taxon>Epsilonproteobacteria</taxon>
        <taxon>Campylobacterales</taxon>
        <taxon>Sulfurovaceae</taxon>
        <taxon>Sulfurovum</taxon>
    </lineage>
</organism>
<protein>
    <recommendedName>
        <fullName evidence="1">Glutamate--tRNA ligase 1</fullName>
        <ecNumber evidence="1">6.1.1.17</ecNumber>
    </recommendedName>
    <alternativeName>
        <fullName evidence="1">Glutamyl-tRNA synthetase 1</fullName>
        <shortName evidence="1">GluRS 1</shortName>
    </alternativeName>
</protein>
<reference key="1">
    <citation type="journal article" date="2007" name="Proc. Natl. Acad. Sci. U.S.A.">
        <title>Deep-sea vent epsilon-proteobacterial genomes provide insights into emergence of pathogens.</title>
        <authorList>
            <person name="Nakagawa S."/>
            <person name="Takaki Y."/>
            <person name="Shimamura S."/>
            <person name="Reysenbach A.-L."/>
            <person name="Takai K."/>
            <person name="Horikoshi K."/>
        </authorList>
    </citation>
    <scope>NUCLEOTIDE SEQUENCE [LARGE SCALE GENOMIC DNA]</scope>
    <source>
        <strain>NBC37-1</strain>
    </source>
</reference>
<feature type="chain" id="PRO_1000001977" description="Glutamate--tRNA ligase 1">
    <location>
        <begin position="1"/>
        <end position="462"/>
    </location>
</feature>
<feature type="short sequence motif" description="'HIGH' region" evidence="1">
    <location>
        <begin position="8"/>
        <end position="18"/>
    </location>
</feature>
<feature type="short sequence motif" description="'KMSKS' region" evidence="1">
    <location>
        <begin position="236"/>
        <end position="240"/>
    </location>
</feature>
<feature type="binding site" evidence="1">
    <location>
        <position position="239"/>
    </location>
    <ligand>
        <name>ATP</name>
        <dbReference type="ChEBI" id="CHEBI:30616"/>
    </ligand>
</feature>
<comment type="function">
    <text evidence="1">Catalyzes the attachment of glutamate to tRNA(Glu) in a two-step reaction: glutamate is first activated by ATP to form Glu-AMP and then transferred to the acceptor end of tRNA(Glu).</text>
</comment>
<comment type="catalytic activity">
    <reaction evidence="1">
        <text>tRNA(Glu) + L-glutamate + ATP = L-glutamyl-tRNA(Glu) + AMP + diphosphate</text>
        <dbReference type="Rhea" id="RHEA:23540"/>
        <dbReference type="Rhea" id="RHEA-COMP:9663"/>
        <dbReference type="Rhea" id="RHEA-COMP:9680"/>
        <dbReference type="ChEBI" id="CHEBI:29985"/>
        <dbReference type="ChEBI" id="CHEBI:30616"/>
        <dbReference type="ChEBI" id="CHEBI:33019"/>
        <dbReference type="ChEBI" id="CHEBI:78442"/>
        <dbReference type="ChEBI" id="CHEBI:78520"/>
        <dbReference type="ChEBI" id="CHEBI:456215"/>
        <dbReference type="EC" id="6.1.1.17"/>
    </reaction>
</comment>
<comment type="subunit">
    <text evidence="1">Monomer.</text>
</comment>
<comment type="subcellular location">
    <subcellularLocation>
        <location evidence="1">Cytoplasm</location>
    </subcellularLocation>
</comment>
<comment type="similarity">
    <text evidence="1">Belongs to the class-I aminoacyl-tRNA synthetase family. Glutamate--tRNA ligase type 1 subfamily.</text>
</comment>
<evidence type="ECO:0000255" key="1">
    <source>
        <dbReference type="HAMAP-Rule" id="MF_00022"/>
    </source>
</evidence>
<keyword id="KW-0030">Aminoacyl-tRNA synthetase</keyword>
<keyword id="KW-0067">ATP-binding</keyword>
<keyword id="KW-0963">Cytoplasm</keyword>
<keyword id="KW-0436">Ligase</keyword>
<keyword id="KW-0547">Nucleotide-binding</keyword>
<keyword id="KW-0648">Protein biosynthesis</keyword>
<name>SYE1_SULNB</name>
<proteinExistence type="inferred from homology"/>
<accession>A6Q6F9</accession>
<gene>
    <name evidence="1" type="primary">gltX1</name>
    <name type="ordered locus">SUN_0108</name>
</gene>